<dbReference type="EMBL" id="V01555">
    <property type="protein sequence ID" value="CAA24814.1"/>
    <property type="molecule type" value="Genomic_DNA"/>
</dbReference>
<dbReference type="EMBL" id="AJ507799">
    <property type="protein sequence ID" value="CAD53424.1"/>
    <property type="molecule type" value="Genomic_DNA"/>
</dbReference>
<dbReference type="PIR" id="A43043">
    <property type="entry name" value="QQBE29"/>
</dbReference>
<dbReference type="RefSeq" id="YP_401674.1">
    <property type="nucleotide sequence ID" value="NC_007605.1"/>
</dbReference>
<dbReference type="SMR" id="P03209"/>
<dbReference type="BioGRID" id="971769">
    <property type="interactions" value="4"/>
</dbReference>
<dbReference type="IntAct" id="P03209">
    <property type="interactions" value="15"/>
</dbReference>
<dbReference type="MINT" id="P03209"/>
<dbReference type="DNASU" id="3783727"/>
<dbReference type="GeneID" id="3783727"/>
<dbReference type="KEGG" id="vg:3783727"/>
<dbReference type="SIGNOR" id="P03209"/>
<dbReference type="Proteomes" id="UP000153037">
    <property type="component" value="Segment"/>
</dbReference>
<dbReference type="GO" id="GO:0042025">
    <property type="term" value="C:host cell nucleus"/>
    <property type="evidence" value="ECO:0007669"/>
    <property type="project" value="UniProtKB-SubCell"/>
</dbReference>
<dbReference type="GO" id="GO:0019033">
    <property type="term" value="C:viral tegument"/>
    <property type="evidence" value="ECO:0007669"/>
    <property type="project" value="UniProtKB-SubCell"/>
</dbReference>
<dbReference type="GO" id="GO:0003677">
    <property type="term" value="F:DNA binding"/>
    <property type="evidence" value="ECO:0007669"/>
    <property type="project" value="UniProtKB-KW"/>
</dbReference>
<dbReference type="GO" id="GO:0050434">
    <property type="term" value="P:positive regulation of viral transcription"/>
    <property type="evidence" value="ECO:0000314"/>
    <property type="project" value="CACAO"/>
</dbReference>
<dbReference type="GO" id="GO:0006355">
    <property type="term" value="P:regulation of DNA-templated transcription"/>
    <property type="evidence" value="ECO:0007669"/>
    <property type="project" value="InterPro"/>
</dbReference>
<dbReference type="GO" id="GO:0019046">
    <property type="term" value="P:release from viral latency"/>
    <property type="evidence" value="ECO:0007669"/>
    <property type="project" value="UniProtKB-KW"/>
</dbReference>
<dbReference type="InterPro" id="IPR004998">
    <property type="entry name" value="Herpes_TAF50"/>
</dbReference>
<dbReference type="Pfam" id="PF03326">
    <property type="entry name" value="Herpes_TAF50"/>
    <property type="match status" value="1"/>
</dbReference>
<organism>
    <name type="scientific">Epstein-Barr virus (strain B95-8)</name>
    <name type="common">HHV-4</name>
    <name type="synonym">Human herpesvirus 4</name>
    <dbReference type="NCBI Taxonomy" id="10377"/>
    <lineage>
        <taxon>Viruses</taxon>
        <taxon>Duplodnaviria</taxon>
        <taxon>Heunggongvirae</taxon>
        <taxon>Peploviricota</taxon>
        <taxon>Herviviricetes</taxon>
        <taxon>Herpesvirales</taxon>
        <taxon>Orthoherpesviridae</taxon>
        <taxon>Gammaherpesvirinae</taxon>
        <taxon>Lymphocryptovirus</taxon>
        <taxon>Lymphocryptovirus humangamma4</taxon>
        <taxon>Epstein-Barr virus (strain GD1)</taxon>
    </lineage>
</organism>
<reference key="1">
    <citation type="journal article" date="1984" name="Nature">
        <title>DNA sequence and expression of the B95-8 Epstein-Barr virus genome.</title>
        <authorList>
            <person name="Baer R."/>
            <person name="Bankier A.T."/>
            <person name="Biggin M.D."/>
            <person name="Deininger P.L."/>
            <person name="Farrell P.J."/>
            <person name="Gibson T.J."/>
            <person name="Hatfull G."/>
            <person name="Hudson G.S."/>
            <person name="Satchwell S.C."/>
            <person name="Seguin C."/>
            <person name="Tuffnell P.S."/>
            <person name="Barrell B.G."/>
        </authorList>
    </citation>
    <scope>NUCLEOTIDE SEQUENCE [LARGE SCALE GENOMIC DNA]</scope>
</reference>
<reference key="2">
    <citation type="journal article" date="2003" name="Virology">
        <title>Updated Epstein-Barr virus (EBV) DNA sequence and analysis of a promoter for the BART (CST, BARF0) RNAs of EBV.</title>
        <authorList>
            <person name="de Jesus O."/>
            <person name="Smith P.R."/>
            <person name="Spender L.C."/>
            <person name="Elgueta Karstegl C."/>
            <person name="Niller H.H."/>
            <person name="Huang D."/>
            <person name="Farrell P.J."/>
        </authorList>
    </citation>
    <scope>GENOME REANNOTATION</scope>
</reference>
<reference key="3">
    <citation type="journal article" date="2005" name="Nucleic Acids Res.">
        <title>Activation of Sp1-mediated transcription by Rta of Epstein-Barr virus via an interaction with MCAF1.</title>
        <authorList>
            <person name="Chang L.-K."/>
            <person name="Chung J.-Y."/>
            <person name="Hong Y.-R."/>
            <person name="Ichimura T."/>
            <person name="Nakao M."/>
            <person name="Liu S.-T."/>
        </authorList>
    </citation>
    <scope>INTERACTION WITH HUMAN ATF7IP</scope>
</reference>
<reference key="4">
    <citation type="journal article" date="2009" name="Cell Cycle">
        <title>The Epstein-Barr virus replication and transcription activator, Rta/BRLF1, induces cellular senescence in epithelial cells.</title>
        <authorList>
            <person name="Chen Y.L."/>
            <person name="Chen Y.J."/>
            <person name="Tsai W.H."/>
            <person name="Ko Y.C."/>
            <person name="Chen J.Y."/>
            <person name="Lin S.F."/>
        </authorList>
    </citation>
    <scope>FUNCTION</scope>
</reference>
<reference key="5">
    <citation type="journal article" date="2007" name="J. Virol.">
        <title>Epstein-Barr virus transcription activator Rta upregulates decoy receptor 3 expression by binding to its promoter.</title>
        <authorList>
            <person name="Ho C.H."/>
            <person name="Hsu C.F."/>
            <person name="Fong P.F."/>
            <person name="Tai S.K."/>
            <person name="Hsieh S.L."/>
            <person name="Chen C.J."/>
        </authorList>
    </citation>
    <scope>FUNCTION</scope>
</reference>
<reference key="6">
    <citation type="journal article" date="2007" name="Curr. Top. Microbiol. Immunol.">
        <title>The Rta/Orf50 transactivator proteins of the gamma-herpesviridae.</title>
        <authorList>
            <person name="Staudt M.R."/>
            <person name="Dittmer D.P."/>
        </authorList>
    </citation>
    <scope>REVIEW</scope>
</reference>
<reference key="7">
    <citation type="journal article" date="2018" name="PLoS Pathog.">
        <title>A genome-wide screen of Epstein-Barr virus proteins that modulate host SUMOylation identifies a SUMO E3 ligase conserved in herpesviruses.</title>
        <authorList>
            <person name="De La Cruz-Herrera C.F."/>
            <person name="Shire K."/>
            <person name="Siddiqi U.Z."/>
            <person name="Frappier L."/>
        </authorList>
    </citation>
    <scope>FUNCTION</scope>
</reference>
<reference key="8">
    <citation type="journal article" date="2020" name="Biochem. Biophys. Res. Commun.">
        <title>Rta is an Epstein-Barr virus tegument protein that improves the stability of capsid protein BORF1.</title>
        <authorList>
            <person name="Huang H.H."/>
            <person name="Wang W.H."/>
            <person name="Feng T.H."/>
            <person name="Chang L.K."/>
        </authorList>
    </citation>
    <scope>FUNCTION</scope>
    <scope>INTERACTION WITH CAPSID PROTEIN TRX1</scope>
    <scope>SUBCELLULAR LOCATION</scope>
</reference>
<reference key="9">
    <citation type="journal article" date="2021" name="EMBO Rep.">
        <title>BRLF1 suppresses RNA Pol III-mediated RIG-I inflammasome activation in the early EBV lytic lifecycle.</title>
        <authorList>
            <person name="Long X."/>
            <person name="Yang J."/>
            <person name="Zhang X."/>
            <person name="Yang Z."/>
            <person name="Li Y."/>
            <person name="Wang F."/>
            <person name="Li X."/>
            <person name="Kuang E."/>
        </authorList>
    </citation>
    <scope>FUNCTION</scope>
    <scope>INTERACTION WITH HOST RNA POLYMERASE III</scope>
</reference>
<comment type="function">
    <text evidence="3 4 5 6 7 8">Immediate-early transcription factor that controls the initiation of viral lytic gene expression and lytic reactivation from latency (PubMed:17089794). Triggers lytic replication, and initiates a cellular senescence program in epithelial cells (PubMed:19098430). Up-regulates human DCR3/TNFRSF6B by directly binding to its receptor (PubMed:17301127). Globally induces a proteasome-dependent loss of SUMOylated proteins in the host cell and the loss of promeylocytic leukemia nuclear bodies (PubMed:29979787). Improves the stability of the triplex capsid protein TRX1 by reducing the ubiquitination level of the latter (PubMed:31948747). Mediates evasion of inflammasome activation and antiviral responses (T- and NK cell activation) during EBV early lytic infection (PubMed:33225563).</text>
</comment>
<comment type="subunit">
    <text evidence="2 7">Interacts with human ATF7IP protein, leading to promote and regulate host genes in virus-infected cells (PubMed:16314315). Interacts with RNA polymerase III complex; this interaction downregulates small RNA transcription and 5'-pppRNA production (PubMed:33225563).</text>
</comment>
<comment type="interaction">
    <interactant intactId="EBI-2621080">
        <id>P03209</id>
    </interactant>
    <interactant intactId="EBI-2621084">
        <id>Q3KSP5</id>
        <label>LF2</label>
    </interactant>
    <organismsDiffer>true</organismsDiffer>
    <experiments>2</experiments>
</comment>
<comment type="subcellular location">
    <subcellularLocation>
        <location evidence="6">Host nucleus</location>
    </subcellularLocation>
    <subcellularLocation>
        <location>Virion tegument</location>
    </subcellularLocation>
    <text evidence="6">Localizes to the host nucleus during the viral lytic induction.</text>
</comment>
<comment type="similarity">
    <text evidence="9">Belongs to the herpesviridae Rta family.</text>
</comment>
<sequence length="605" mass="66595">MRPKKDGLEDFLRLTPEIKKQLGSLVSDYCNVLNKEFTAGSVEITLRSYKICKAFINEAKAHGREWGGLMATLNICNFWAILRNNRVRRRAENAGNDACSIACPIVMRYVLDHLIVVTDRFFIQAPSNRVMIPATIGTAMYKLLKHSRVRAYTYSKVLGVDRAAIMASGKQVVEHLNRMEKEGLLSSKFKAFCKWVFTYPVLEEMFQTMVSSKTGHLTDDVKDVRALIKTLPRASYSSHAGQRSYVSGVLPACLLSTKSKAVETPILVSGADRMDEELMGNDGGASHTEARYSESGQFHAFTDELESLPSPTMPLKPGAQSADCGDSSSSSSDSGNSDTEQSEREEARAEAPRLRAPKSRRTSRPNRGQTPCPSNAAEPEQPWIAAVHQESDERPIFPHPSKPTFLPPVKRKKGLRDSREGMFLPKPEAGSAISDVFEGREVCQPKRIRPFHPPGSPWANRPLPASLAPTPTGPVHEPVGSLTPAPVPQPLDPAPAVTPEASHLLEDPDEETSQAVKALREMADTVIPQKEEAAICGQMDLSHPPPRGHLDELTTTLESMTEDLNLDSPLTPELNEILDTFLNDECLLHAMHISTGLSIFDTSLF</sequence>
<evidence type="ECO:0000256" key="1">
    <source>
        <dbReference type="SAM" id="MobiDB-lite"/>
    </source>
</evidence>
<evidence type="ECO:0000269" key="2">
    <source>
    </source>
</evidence>
<evidence type="ECO:0000269" key="3">
    <source>
    </source>
</evidence>
<evidence type="ECO:0000269" key="4">
    <source>
    </source>
</evidence>
<evidence type="ECO:0000269" key="5">
    <source>
    </source>
</evidence>
<evidence type="ECO:0000269" key="6">
    <source>
    </source>
</evidence>
<evidence type="ECO:0000269" key="7">
    <source>
    </source>
</evidence>
<evidence type="ECO:0000303" key="8">
    <source>
    </source>
</evidence>
<evidence type="ECO:0000305" key="9"/>
<proteinExistence type="evidence at protein level"/>
<protein>
    <recommendedName>
        <fullName>Replication and transcription activator</fullName>
        <shortName>Rta</shortName>
    </recommendedName>
    <alternativeName>
        <fullName>Immediate-early protein Rta</fullName>
    </alternativeName>
    <alternativeName>
        <fullName>Protein R</fullName>
    </alternativeName>
</protein>
<gene>
    <name type="ORF">BRLF1</name>
</gene>
<feature type="chain" id="PRO_0000116201" description="Replication and transcription activator">
    <location>
        <begin position="1"/>
        <end position="605"/>
    </location>
</feature>
<feature type="region of interest" description="Disordered" evidence="1">
    <location>
        <begin position="307"/>
        <end position="380"/>
    </location>
</feature>
<feature type="region of interest" description="Disordered" evidence="1">
    <location>
        <begin position="447"/>
        <end position="499"/>
    </location>
</feature>
<feature type="compositionally biased region" description="Low complexity" evidence="1">
    <location>
        <begin position="321"/>
        <end position="338"/>
    </location>
</feature>
<feature type="compositionally biased region" description="Basic and acidic residues" evidence="1">
    <location>
        <begin position="341"/>
        <end position="353"/>
    </location>
</feature>
<feature type="compositionally biased region" description="Basic residues" evidence="1">
    <location>
        <begin position="355"/>
        <end position="364"/>
    </location>
</feature>
<name>BRLF1_EBVB9</name>
<keyword id="KW-0010">Activator</keyword>
<keyword id="KW-0238">DNA-binding</keyword>
<keyword id="KW-0244">Early protein</keyword>
<keyword id="KW-1048">Host nucleus</keyword>
<keyword id="KW-0945">Host-virus interaction</keyword>
<keyword id="KW-1185">Reference proteome</keyword>
<keyword id="KW-0804">Transcription</keyword>
<keyword id="KW-0805">Transcription regulation</keyword>
<keyword id="KW-1251">Viral latency</keyword>
<keyword id="KW-1272">Viral reactivation from latency</keyword>
<keyword id="KW-0946">Virion</keyword>
<keyword id="KW-0920">Virion tegument</keyword>
<organismHost>
    <name type="scientific">Homo sapiens</name>
    <name type="common">Human</name>
    <dbReference type="NCBI Taxonomy" id="9606"/>
</organismHost>
<accession>P03209</accession>
<accession>Q777E4</accession>